<sequence>MERFLENVMYASRWLLAPVYFGLSLALIALALKFFQEILHVLPNVFALAEADLILVLLSLVDMTLVGGLLVMVMFSGYENFVSQLDISAGKEKLNWLGKMDATSLKNKVAASIVAISSIHLLRVFMDAKNVPDNKLMWYVIIHLTFVLSAFVMGYLDRLTRHNH</sequence>
<feature type="chain" id="PRO_1000096273" description="UPF0114 protein YqhA">
    <location>
        <begin position="1"/>
        <end position="164"/>
    </location>
</feature>
<feature type="transmembrane region" description="Helical" evidence="1">
    <location>
        <begin position="15"/>
        <end position="35"/>
    </location>
</feature>
<feature type="transmembrane region" description="Helical" evidence="1">
    <location>
        <begin position="53"/>
        <end position="73"/>
    </location>
</feature>
<feature type="transmembrane region" description="Helical" evidence="1">
    <location>
        <begin position="136"/>
        <end position="156"/>
    </location>
</feature>
<organism>
    <name type="scientific">Salmonella agona (strain SL483)</name>
    <dbReference type="NCBI Taxonomy" id="454166"/>
    <lineage>
        <taxon>Bacteria</taxon>
        <taxon>Pseudomonadati</taxon>
        <taxon>Pseudomonadota</taxon>
        <taxon>Gammaproteobacteria</taxon>
        <taxon>Enterobacterales</taxon>
        <taxon>Enterobacteriaceae</taxon>
        <taxon>Salmonella</taxon>
    </lineage>
</organism>
<reference key="1">
    <citation type="journal article" date="2011" name="J. Bacteriol.">
        <title>Comparative genomics of 28 Salmonella enterica isolates: evidence for CRISPR-mediated adaptive sublineage evolution.</title>
        <authorList>
            <person name="Fricke W.F."/>
            <person name="Mammel M.K."/>
            <person name="McDermott P.F."/>
            <person name="Tartera C."/>
            <person name="White D.G."/>
            <person name="Leclerc J.E."/>
            <person name="Ravel J."/>
            <person name="Cebula T.A."/>
        </authorList>
    </citation>
    <scope>NUCLEOTIDE SEQUENCE [LARGE SCALE GENOMIC DNA]</scope>
    <source>
        <strain>SL483</strain>
    </source>
</reference>
<gene>
    <name evidence="1" type="primary">yqhA</name>
    <name type="ordered locus">SeAg_B3327</name>
</gene>
<proteinExistence type="inferred from homology"/>
<dbReference type="EMBL" id="CP001138">
    <property type="protein sequence ID" value="ACH51920.1"/>
    <property type="molecule type" value="Genomic_DNA"/>
</dbReference>
<dbReference type="RefSeq" id="WP_000439335.1">
    <property type="nucleotide sequence ID" value="NC_011149.1"/>
</dbReference>
<dbReference type="KEGG" id="sea:SeAg_B3327"/>
<dbReference type="HOGENOM" id="CLU_097887_1_1_6"/>
<dbReference type="Proteomes" id="UP000008819">
    <property type="component" value="Chromosome"/>
</dbReference>
<dbReference type="GO" id="GO:0005886">
    <property type="term" value="C:plasma membrane"/>
    <property type="evidence" value="ECO:0007669"/>
    <property type="project" value="UniProtKB-SubCell"/>
</dbReference>
<dbReference type="HAMAP" id="MF_00143">
    <property type="entry name" value="UPF0114"/>
    <property type="match status" value="1"/>
</dbReference>
<dbReference type="InterPro" id="IPR005134">
    <property type="entry name" value="UPF0114"/>
</dbReference>
<dbReference type="InterPro" id="IPR020761">
    <property type="entry name" value="UPF0114_bac"/>
</dbReference>
<dbReference type="NCBIfam" id="TIGR00645">
    <property type="entry name" value="HI0507"/>
    <property type="match status" value="1"/>
</dbReference>
<dbReference type="PANTHER" id="PTHR38596">
    <property type="entry name" value="UPF0114 PROTEIN YQHA"/>
    <property type="match status" value="1"/>
</dbReference>
<dbReference type="PANTHER" id="PTHR38596:SF1">
    <property type="entry name" value="UPF0114 PROTEIN YQHA"/>
    <property type="match status" value="1"/>
</dbReference>
<dbReference type="Pfam" id="PF03350">
    <property type="entry name" value="UPF0114"/>
    <property type="match status" value="1"/>
</dbReference>
<evidence type="ECO:0000255" key="1">
    <source>
        <dbReference type="HAMAP-Rule" id="MF_00143"/>
    </source>
</evidence>
<comment type="subcellular location">
    <subcellularLocation>
        <location evidence="1">Cell membrane</location>
        <topology evidence="1">Multi-pass membrane protein</topology>
    </subcellularLocation>
</comment>
<comment type="similarity">
    <text evidence="1">Belongs to the UPF0114 family.</text>
</comment>
<keyword id="KW-1003">Cell membrane</keyword>
<keyword id="KW-0472">Membrane</keyword>
<keyword id="KW-0812">Transmembrane</keyword>
<keyword id="KW-1133">Transmembrane helix</keyword>
<protein>
    <recommendedName>
        <fullName evidence="1">UPF0114 protein YqhA</fullName>
    </recommendedName>
</protein>
<accession>B5F641</accession>
<name>YQHA_SALA4</name>